<feature type="chain" id="PRO_0000205831" description="Nicotinate phosphoribosyltransferase">
    <location>
        <begin position="1"/>
        <end position="401"/>
    </location>
</feature>
<feature type="modified residue" description="Phosphohistidine; by autocatalysis" evidence="1">
    <location>
        <position position="221"/>
    </location>
</feature>
<reference key="1">
    <citation type="journal article" date="2004" name="Proc. Natl. Acad. Sci. U.S.A.">
        <title>Genome sequence of the enterobacterial phytopathogen Erwinia carotovora subsp. atroseptica and characterization of virulence factors.</title>
        <authorList>
            <person name="Bell K.S."/>
            <person name="Sebaihia M."/>
            <person name="Pritchard L."/>
            <person name="Holden M.T.G."/>
            <person name="Hyman L.J."/>
            <person name="Holeva M.C."/>
            <person name="Thomson N.R."/>
            <person name="Bentley S.D."/>
            <person name="Churcher L.J.C."/>
            <person name="Mungall K."/>
            <person name="Atkin R."/>
            <person name="Bason N."/>
            <person name="Brooks K."/>
            <person name="Chillingworth T."/>
            <person name="Clark K."/>
            <person name="Doggett J."/>
            <person name="Fraser A."/>
            <person name="Hance Z."/>
            <person name="Hauser H."/>
            <person name="Jagels K."/>
            <person name="Moule S."/>
            <person name="Norbertczak H."/>
            <person name="Ormond D."/>
            <person name="Price C."/>
            <person name="Quail M.A."/>
            <person name="Sanders M."/>
            <person name="Walker D."/>
            <person name="Whitehead S."/>
            <person name="Salmond G.P.C."/>
            <person name="Birch P.R.J."/>
            <person name="Parkhill J."/>
            <person name="Toth I.K."/>
        </authorList>
    </citation>
    <scope>NUCLEOTIDE SEQUENCE [LARGE SCALE GENOMIC DNA]</scope>
    <source>
        <strain>SCRI 1043 / ATCC BAA-672</strain>
    </source>
</reference>
<name>PNCB_PECAS</name>
<evidence type="ECO:0000255" key="1">
    <source>
        <dbReference type="HAMAP-Rule" id="MF_00570"/>
    </source>
</evidence>
<gene>
    <name evidence="1" type="primary">pncB</name>
    <name type="ordered locus">ECA2540</name>
</gene>
<organism>
    <name type="scientific">Pectobacterium atrosepticum (strain SCRI 1043 / ATCC BAA-672)</name>
    <name type="common">Erwinia carotovora subsp. atroseptica</name>
    <dbReference type="NCBI Taxonomy" id="218491"/>
    <lineage>
        <taxon>Bacteria</taxon>
        <taxon>Pseudomonadati</taxon>
        <taxon>Pseudomonadota</taxon>
        <taxon>Gammaproteobacteria</taxon>
        <taxon>Enterobacterales</taxon>
        <taxon>Pectobacteriaceae</taxon>
        <taxon>Pectobacterium</taxon>
    </lineage>
</organism>
<dbReference type="EC" id="6.3.4.21" evidence="1"/>
<dbReference type="EMBL" id="BX950851">
    <property type="protein sequence ID" value="CAG75439.1"/>
    <property type="molecule type" value="Genomic_DNA"/>
</dbReference>
<dbReference type="RefSeq" id="WP_011094085.1">
    <property type="nucleotide sequence ID" value="NC_004547.2"/>
</dbReference>
<dbReference type="SMR" id="Q6D454"/>
<dbReference type="STRING" id="218491.ECA2540"/>
<dbReference type="GeneID" id="57208763"/>
<dbReference type="KEGG" id="eca:ECA2540"/>
<dbReference type="PATRIC" id="fig|218491.5.peg.2572"/>
<dbReference type="eggNOG" id="COG1488">
    <property type="taxonomic scope" value="Bacteria"/>
</dbReference>
<dbReference type="HOGENOM" id="CLU_030991_1_0_6"/>
<dbReference type="OrthoDB" id="9771406at2"/>
<dbReference type="UniPathway" id="UPA00253">
    <property type="reaction ID" value="UER00457"/>
</dbReference>
<dbReference type="Proteomes" id="UP000007966">
    <property type="component" value="Chromosome"/>
</dbReference>
<dbReference type="GO" id="GO:0005829">
    <property type="term" value="C:cytosol"/>
    <property type="evidence" value="ECO:0007669"/>
    <property type="project" value="TreeGrafter"/>
</dbReference>
<dbReference type="GO" id="GO:0004516">
    <property type="term" value="F:nicotinate phosphoribosyltransferase activity"/>
    <property type="evidence" value="ECO:0007669"/>
    <property type="project" value="UniProtKB-UniRule"/>
</dbReference>
<dbReference type="GO" id="GO:0034355">
    <property type="term" value="P:NAD biosynthetic process via the salvage pathway"/>
    <property type="evidence" value="ECO:0007669"/>
    <property type="project" value="TreeGrafter"/>
</dbReference>
<dbReference type="CDD" id="cd01401">
    <property type="entry name" value="PncB_like"/>
    <property type="match status" value="1"/>
</dbReference>
<dbReference type="FunFam" id="3.20.140.10:FF:000001">
    <property type="entry name" value="Nicotinate phosphoribosyltransferase"/>
    <property type="match status" value="1"/>
</dbReference>
<dbReference type="Gene3D" id="3.20.140.10">
    <property type="entry name" value="nicotinate phosphoribosyltransferase"/>
    <property type="match status" value="1"/>
</dbReference>
<dbReference type="HAMAP" id="MF_00570">
    <property type="entry name" value="NAPRTase"/>
    <property type="match status" value="1"/>
</dbReference>
<dbReference type="InterPro" id="IPR041525">
    <property type="entry name" value="N/Namide_PRibTrfase"/>
</dbReference>
<dbReference type="InterPro" id="IPR040727">
    <property type="entry name" value="NAPRTase_N"/>
</dbReference>
<dbReference type="InterPro" id="IPR006406">
    <property type="entry name" value="Nic_PRibTrfase"/>
</dbReference>
<dbReference type="InterPro" id="IPR007229">
    <property type="entry name" value="Nic_PRibTrfase-Fam"/>
</dbReference>
<dbReference type="InterPro" id="IPR036068">
    <property type="entry name" value="Nicotinate_pribotase-like_C"/>
</dbReference>
<dbReference type="NCBIfam" id="TIGR01514">
    <property type="entry name" value="NAPRTase"/>
    <property type="match status" value="1"/>
</dbReference>
<dbReference type="NCBIfam" id="NF003704">
    <property type="entry name" value="PRK05321.1"/>
    <property type="match status" value="1"/>
</dbReference>
<dbReference type="PANTHER" id="PTHR11098">
    <property type="entry name" value="NICOTINATE PHOSPHORIBOSYLTRANSFERASE"/>
    <property type="match status" value="1"/>
</dbReference>
<dbReference type="PANTHER" id="PTHR11098:SF1">
    <property type="entry name" value="NICOTINATE PHOSPHORIBOSYLTRANSFERASE"/>
    <property type="match status" value="1"/>
</dbReference>
<dbReference type="Pfam" id="PF04095">
    <property type="entry name" value="NAPRTase"/>
    <property type="match status" value="1"/>
</dbReference>
<dbReference type="Pfam" id="PF17767">
    <property type="entry name" value="NAPRTase_N"/>
    <property type="match status" value="1"/>
</dbReference>
<dbReference type="PIRSF" id="PIRSF000484">
    <property type="entry name" value="NAPRT"/>
    <property type="match status" value="1"/>
</dbReference>
<dbReference type="SUPFAM" id="SSF51690">
    <property type="entry name" value="Nicotinate/Quinolinate PRTase C-terminal domain-like"/>
    <property type="match status" value="1"/>
</dbReference>
<dbReference type="SUPFAM" id="SSF54675">
    <property type="entry name" value="Nicotinate/Quinolinate PRTase N-terminal domain-like"/>
    <property type="match status" value="1"/>
</dbReference>
<keyword id="KW-0436">Ligase</keyword>
<keyword id="KW-0597">Phosphoprotein</keyword>
<keyword id="KW-0662">Pyridine nucleotide biosynthesis</keyword>
<keyword id="KW-1185">Reference proteome</keyword>
<sequence>MTLHTSPILHSLLDTDAYKLHMQQAVYHHYYDVDVAAEFRCRGDELLGVYADEIAHQVDLMRFLSLSDDEFTYLSSLPFFQQDYLNWLRNFRFNPQQVSIKNNAGKLDIRITGPWREVILWEVPLLAVISEVVHRHRSPNVTTEQAVAQLSTSLESFRQNSMNVDLSQFKLMDFGTRRRFSGDIQQTIVTALQADFPYLIGTSNYDLARRLGITPVGTQAHEWFQAHQQISPTLANSQRAALQMWLREYPTHLGIALTDCITMDAFLRDFDLPFAEAYQGLRHDSGDPVDWGEKAIAHYQRLNIDPMSKTLVFSDNLNLDKALVLYRHFCQRVNLVFGMGTRLTCDIPGVKPLNIVIKLVECNGKPVAKLSDSPGKTICQDQNFVCELRKAFDLPRVKKAS</sequence>
<accession>Q6D454</accession>
<comment type="function">
    <text evidence="1">Catalyzes the synthesis of beta-nicotinate D-ribonucleotide from nicotinate and 5-phospho-D-ribose 1-phosphate at the expense of ATP.</text>
</comment>
<comment type="catalytic activity">
    <reaction evidence="1">
        <text>nicotinate + 5-phospho-alpha-D-ribose 1-diphosphate + ATP + H2O = nicotinate beta-D-ribonucleotide + ADP + phosphate + diphosphate</text>
        <dbReference type="Rhea" id="RHEA:36163"/>
        <dbReference type="ChEBI" id="CHEBI:15377"/>
        <dbReference type="ChEBI" id="CHEBI:30616"/>
        <dbReference type="ChEBI" id="CHEBI:32544"/>
        <dbReference type="ChEBI" id="CHEBI:33019"/>
        <dbReference type="ChEBI" id="CHEBI:43474"/>
        <dbReference type="ChEBI" id="CHEBI:57502"/>
        <dbReference type="ChEBI" id="CHEBI:58017"/>
        <dbReference type="ChEBI" id="CHEBI:456216"/>
        <dbReference type="EC" id="6.3.4.21"/>
    </reaction>
</comment>
<comment type="pathway">
    <text evidence="1">Cofactor biosynthesis; NAD(+) biosynthesis; nicotinate D-ribonucleotide from nicotinate: step 1/1.</text>
</comment>
<comment type="PTM">
    <text evidence="1">Transiently phosphorylated on a His residue during the reaction cycle. Phosphorylation strongly increases the affinity for substrates and increases the rate of nicotinate D-ribonucleotide production. Dephosphorylation regenerates the low-affinity form of the enzyme, leading to product release.</text>
</comment>
<comment type="similarity">
    <text evidence="1">Belongs to the NAPRTase family.</text>
</comment>
<proteinExistence type="inferred from homology"/>
<protein>
    <recommendedName>
        <fullName evidence="1">Nicotinate phosphoribosyltransferase</fullName>
        <shortName evidence="1">NAPRTase</shortName>
        <ecNumber evidence="1">6.3.4.21</ecNumber>
    </recommendedName>
</protein>